<comment type="function">
    <text evidence="1">Catalyzes a mechanistically unusual reaction, the ATP-dependent insertion of CO2 between the N7 and N8 nitrogen atoms of 7,8-diaminopelargonic acid (DAPA, also called 7,8-diammoniononanoate) to form a ureido ring.</text>
</comment>
<comment type="catalytic activity">
    <reaction evidence="1">
        <text>(7R,8S)-7,8-diammoniononanoate + CO2 + ATP = (4R,5S)-dethiobiotin + ADP + phosphate + 3 H(+)</text>
        <dbReference type="Rhea" id="RHEA:15805"/>
        <dbReference type="ChEBI" id="CHEBI:15378"/>
        <dbReference type="ChEBI" id="CHEBI:16526"/>
        <dbReference type="ChEBI" id="CHEBI:30616"/>
        <dbReference type="ChEBI" id="CHEBI:43474"/>
        <dbReference type="ChEBI" id="CHEBI:149469"/>
        <dbReference type="ChEBI" id="CHEBI:149473"/>
        <dbReference type="ChEBI" id="CHEBI:456216"/>
        <dbReference type="EC" id="6.3.3.3"/>
    </reaction>
</comment>
<comment type="cofactor">
    <cofactor evidence="1">
        <name>Mg(2+)</name>
        <dbReference type="ChEBI" id="CHEBI:18420"/>
    </cofactor>
</comment>
<comment type="pathway">
    <text evidence="1">Cofactor biosynthesis; biotin biosynthesis; biotin from 7,8-diaminononanoate: step 1/2.</text>
</comment>
<comment type="subunit">
    <text evidence="1">Homodimer.</text>
</comment>
<comment type="subcellular location">
    <subcellularLocation>
        <location evidence="1">Cytoplasm</location>
    </subcellularLocation>
</comment>
<comment type="similarity">
    <text evidence="1">Belongs to the dethiobiotin synthetase family.</text>
</comment>
<reference key="1">
    <citation type="journal article" date="2008" name="PLoS ONE">
        <title>Genome sequence of Brucella abortus vaccine strain S19 compared to virulent strains yields candidate virulence genes.</title>
        <authorList>
            <person name="Crasta O.R."/>
            <person name="Folkerts O."/>
            <person name="Fei Z."/>
            <person name="Mane S.P."/>
            <person name="Evans C."/>
            <person name="Martino-Catt S."/>
            <person name="Bricker B."/>
            <person name="Yu G."/>
            <person name="Du L."/>
            <person name="Sobral B.W."/>
        </authorList>
    </citation>
    <scope>NUCLEOTIDE SEQUENCE [LARGE SCALE GENOMIC DNA]</scope>
    <source>
        <strain>S19</strain>
    </source>
</reference>
<protein>
    <recommendedName>
        <fullName evidence="1">ATP-dependent dethiobiotin synthetase BioD</fullName>
        <ecNumber evidence="1">6.3.3.3</ecNumber>
    </recommendedName>
    <alternativeName>
        <fullName evidence="1">DTB synthetase</fullName>
        <shortName evidence="1">DTBS</shortName>
    </alternativeName>
    <alternativeName>
        <fullName evidence="1">Dethiobiotin synthase</fullName>
    </alternativeName>
</protein>
<dbReference type="EC" id="6.3.3.3" evidence="1"/>
<dbReference type="EMBL" id="CP000888">
    <property type="protein sequence ID" value="ACD74189.1"/>
    <property type="molecule type" value="Genomic_DNA"/>
</dbReference>
<dbReference type="RefSeq" id="WP_002966138.1">
    <property type="nucleotide sequence ID" value="NC_010740.1"/>
</dbReference>
<dbReference type="SMR" id="B2SBF2"/>
<dbReference type="GeneID" id="93015379"/>
<dbReference type="KEGG" id="bmc:BAbS19_II06940"/>
<dbReference type="HOGENOM" id="CLU_072551_2_0_5"/>
<dbReference type="UniPathway" id="UPA00078">
    <property type="reaction ID" value="UER00161"/>
</dbReference>
<dbReference type="Proteomes" id="UP000002565">
    <property type="component" value="Chromosome 2"/>
</dbReference>
<dbReference type="GO" id="GO:0005829">
    <property type="term" value="C:cytosol"/>
    <property type="evidence" value="ECO:0007669"/>
    <property type="project" value="TreeGrafter"/>
</dbReference>
<dbReference type="GO" id="GO:0005524">
    <property type="term" value="F:ATP binding"/>
    <property type="evidence" value="ECO:0007669"/>
    <property type="project" value="UniProtKB-UniRule"/>
</dbReference>
<dbReference type="GO" id="GO:0004141">
    <property type="term" value="F:dethiobiotin synthase activity"/>
    <property type="evidence" value="ECO:0007669"/>
    <property type="project" value="UniProtKB-UniRule"/>
</dbReference>
<dbReference type="GO" id="GO:0000287">
    <property type="term" value="F:magnesium ion binding"/>
    <property type="evidence" value="ECO:0007669"/>
    <property type="project" value="UniProtKB-UniRule"/>
</dbReference>
<dbReference type="GO" id="GO:0009102">
    <property type="term" value="P:biotin biosynthetic process"/>
    <property type="evidence" value="ECO:0007669"/>
    <property type="project" value="UniProtKB-UniRule"/>
</dbReference>
<dbReference type="CDD" id="cd03109">
    <property type="entry name" value="DTBS"/>
    <property type="match status" value="1"/>
</dbReference>
<dbReference type="Gene3D" id="3.40.50.300">
    <property type="entry name" value="P-loop containing nucleotide triphosphate hydrolases"/>
    <property type="match status" value="1"/>
</dbReference>
<dbReference type="HAMAP" id="MF_00336">
    <property type="entry name" value="BioD"/>
    <property type="match status" value="1"/>
</dbReference>
<dbReference type="InterPro" id="IPR004472">
    <property type="entry name" value="DTB_synth_BioD"/>
</dbReference>
<dbReference type="InterPro" id="IPR027417">
    <property type="entry name" value="P-loop_NTPase"/>
</dbReference>
<dbReference type="NCBIfam" id="TIGR00347">
    <property type="entry name" value="bioD"/>
    <property type="match status" value="1"/>
</dbReference>
<dbReference type="PANTHER" id="PTHR43210:SF2">
    <property type="entry name" value="ATP-DEPENDENT DETHIOBIOTIN SYNTHETASE BIOD 2"/>
    <property type="match status" value="1"/>
</dbReference>
<dbReference type="PANTHER" id="PTHR43210">
    <property type="entry name" value="DETHIOBIOTIN SYNTHETASE"/>
    <property type="match status" value="1"/>
</dbReference>
<dbReference type="Pfam" id="PF13500">
    <property type="entry name" value="AAA_26"/>
    <property type="match status" value="1"/>
</dbReference>
<dbReference type="PIRSF" id="PIRSF006755">
    <property type="entry name" value="DTB_synth"/>
    <property type="match status" value="1"/>
</dbReference>
<dbReference type="SUPFAM" id="SSF52540">
    <property type="entry name" value="P-loop containing nucleoside triphosphate hydrolases"/>
    <property type="match status" value="1"/>
</dbReference>
<sequence>MNSRLIVTGTDTGIGKTVFSAALCHALGAVYWKPVQSGLEEETDSEIVARLAQASPQRILPEAWRLNTPASPHLSARLDGVEIRPEEMHIPATSLPLVIEGAGGLLVPLNDKTLFADLFAIWRIPAILCARAALGTINHTLLSLEAMRSRDIPVLGVAFISEANEDTETTIAHLGRVKRLGRLPLLDDLSPEKLHHSFARNFHIDDFAGVAR</sequence>
<keyword id="KW-0067">ATP-binding</keyword>
<keyword id="KW-0093">Biotin biosynthesis</keyword>
<keyword id="KW-0963">Cytoplasm</keyword>
<keyword id="KW-0436">Ligase</keyword>
<keyword id="KW-0460">Magnesium</keyword>
<keyword id="KW-0479">Metal-binding</keyword>
<keyword id="KW-0547">Nucleotide-binding</keyword>
<gene>
    <name evidence="1" type="primary">bioD</name>
    <name type="ordered locus">BAbS19_II06940</name>
</gene>
<organism>
    <name type="scientific">Brucella abortus (strain S19)</name>
    <dbReference type="NCBI Taxonomy" id="430066"/>
    <lineage>
        <taxon>Bacteria</taxon>
        <taxon>Pseudomonadati</taxon>
        <taxon>Pseudomonadota</taxon>
        <taxon>Alphaproteobacteria</taxon>
        <taxon>Hyphomicrobiales</taxon>
        <taxon>Brucellaceae</taxon>
        <taxon>Brucella/Ochrobactrum group</taxon>
        <taxon>Brucella</taxon>
    </lineage>
</organism>
<evidence type="ECO:0000255" key="1">
    <source>
        <dbReference type="HAMAP-Rule" id="MF_00336"/>
    </source>
</evidence>
<accession>B2SBF2</accession>
<name>BIOD_BRUA1</name>
<feature type="chain" id="PRO_1000119859" description="ATP-dependent dethiobiotin synthetase BioD">
    <location>
        <begin position="1"/>
        <end position="212"/>
    </location>
</feature>
<feature type="active site" evidence="1">
    <location>
        <position position="33"/>
    </location>
</feature>
<feature type="binding site" evidence="1">
    <location>
        <begin position="13"/>
        <end position="18"/>
    </location>
    <ligand>
        <name>ATP</name>
        <dbReference type="ChEBI" id="CHEBI:30616"/>
    </ligand>
</feature>
<feature type="binding site" evidence="1">
    <location>
        <position position="17"/>
    </location>
    <ligand>
        <name>Mg(2+)</name>
        <dbReference type="ChEBI" id="CHEBI:18420"/>
    </ligand>
</feature>
<feature type="binding site" evidence="1">
    <location>
        <position position="37"/>
    </location>
    <ligand>
        <name>substrate</name>
    </ligand>
</feature>
<feature type="binding site" evidence="1">
    <location>
        <begin position="100"/>
        <end position="103"/>
    </location>
    <ligand>
        <name>ATP</name>
        <dbReference type="ChEBI" id="CHEBI:30616"/>
    </ligand>
</feature>
<feature type="binding site" evidence="1">
    <location>
        <position position="100"/>
    </location>
    <ligand>
        <name>Mg(2+)</name>
        <dbReference type="ChEBI" id="CHEBI:18420"/>
    </ligand>
</feature>
<feature type="binding site" evidence="1">
    <location>
        <begin position="160"/>
        <end position="161"/>
    </location>
    <ligand>
        <name>ATP</name>
        <dbReference type="ChEBI" id="CHEBI:30616"/>
    </ligand>
</feature>
<feature type="binding site" evidence="1">
    <location>
        <begin position="184"/>
        <end position="186"/>
    </location>
    <ligand>
        <name>ATP</name>
        <dbReference type="ChEBI" id="CHEBI:30616"/>
    </ligand>
</feature>
<proteinExistence type="inferred from homology"/>